<feature type="chain" id="PRO_0000204275" description="Hemocyanin subunit 4">
    <location>
        <begin position="1"/>
        <end position="22" status="greater than"/>
    </location>
</feature>
<feature type="non-terminal residue" evidence="1">
    <location>
        <position position="22"/>
    </location>
</feature>
<protein>
    <recommendedName>
        <fullName>Hemocyanin subunit 4</fullName>
    </recommendedName>
</protein>
<dbReference type="GO" id="GO:0005576">
    <property type="term" value="C:extracellular region"/>
    <property type="evidence" value="ECO:0007669"/>
    <property type="project" value="UniProtKB-SubCell"/>
</dbReference>
<dbReference type="GO" id="GO:0005344">
    <property type="term" value="F:oxygen carrier activity"/>
    <property type="evidence" value="ECO:0007669"/>
    <property type="project" value="UniProtKB-KW"/>
</dbReference>
<sequence>GAYGQGQNIGQLFVNILIFLFY</sequence>
<organism evidence="1">
    <name type="scientific">Homarus americanus</name>
    <name type="common">American lobster</name>
    <dbReference type="NCBI Taxonomy" id="6706"/>
    <lineage>
        <taxon>Eukaryota</taxon>
        <taxon>Metazoa</taxon>
        <taxon>Ecdysozoa</taxon>
        <taxon>Arthropoda</taxon>
        <taxon>Crustacea</taxon>
        <taxon>Multicrustacea</taxon>
        <taxon>Malacostraca</taxon>
        <taxon>Eumalacostraca</taxon>
        <taxon>Eucarida</taxon>
        <taxon>Decapoda</taxon>
        <taxon>Pleocyemata</taxon>
        <taxon>Astacidea</taxon>
        <taxon>Nephropoidea</taxon>
        <taxon>Nephropidae</taxon>
        <taxon>Homarus</taxon>
    </lineage>
</organism>
<proteinExistence type="evidence at protein level"/>
<evidence type="ECO:0000305" key="1"/>
<reference evidence="1" key="1">
    <citation type="journal article" date="1999" name="Comp. Biochem. Physiol.">
        <title>Subunit composition and N-terminal analysis of arthropod hemocyanins.</title>
        <authorList>
            <person name="Stoeva S."/>
            <person name="Dolashka P."/>
            <person name="Hristova R."/>
            <person name="Genov N."/>
            <person name="Voelter W."/>
        </authorList>
    </citation>
    <scope>PROTEIN SEQUENCE</scope>
</reference>
<name>HCY4_HOMAM</name>
<keyword id="KW-0186">Copper</keyword>
<keyword id="KW-0903">Direct protein sequencing</keyword>
<keyword id="KW-0561">Oxygen transport</keyword>
<keyword id="KW-0964">Secreted</keyword>
<keyword id="KW-0813">Transport</keyword>
<comment type="function">
    <text>Hemocyanins are copper-containing oxygen carriers occurring freely dissolved in the hemolymph of many mollusks and arthropods.</text>
</comment>
<comment type="subcellular location">
    <subcellularLocation>
        <location>Secreted</location>
        <location>Extracellular space</location>
    </subcellularLocation>
</comment>
<comment type="tissue specificity">
    <text>Hemolymph.</text>
</comment>
<comment type="similarity">
    <text evidence="1">Belongs to the tyrosinase family. Hemocyanin subfamily.</text>
</comment>
<accession>P82299</accession>